<feature type="chain" id="PRO_0000090094" description="6-phosphogluconolactonase">
    <location>
        <begin position="1"/>
        <end position="232"/>
    </location>
</feature>
<protein>
    <recommendedName>
        <fullName>6-phosphogluconolactonase</fullName>
        <shortName>6PGL</shortName>
        <ecNumber>3.1.1.31</ecNumber>
    </recommendedName>
</protein>
<organism>
    <name type="scientific">Haemophilus influenzae (strain ATCC 51907 / DSM 11121 / KW20 / Rd)</name>
    <dbReference type="NCBI Taxonomy" id="71421"/>
    <lineage>
        <taxon>Bacteria</taxon>
        <taxon>Pseudomonadati</taxon>
        <taxon>Pseudomonadota</taxon>
        <taxon>Gammaproteobacteria</taxon>
        <taxon>Pasteurellales</taxon>
        <taxon>Pasteurellaceae</taxon>
        <taxon>Haemophilus</taxon>
    </lineage>
</organism>
<dbReference type="EC" id="3.1.1.31"/>
<dbReference type="EMBL" id="L42023">
    <property type="protein sequence ID" value="AAC22212.1"/>
    <property type="status" value="ALT_FRAME"/>
    <property type="molecule type" value="Genomic_DNA"/>
</dbReference>
<dbReference type="PIR" id="D64077">
    <property type="entry name" value="D64077"/>
</dbReference>
<dbReference type="SMR" id="Q57039"/>
<dbReference type="STRING" id="71421.HI_0556"/>
<dbReference type="EnsemblBacteria" id="AAC22212">
    <property type="protein sequence ID" value="AAC22212"/>
    <property type="gene ID" value="HI_0556"/>
</dbReference>
<dbReference type="KEGG" id="hin:HI_0556"/>
<dbReference type="eggNOG" id="COG0363">
    <property type="taxonomic scope" value="Bacteria"/>
</dbReference>
<dbReference type="HOGENOM" id="CLU_053947_4_1_6"/>
<dbReference type="PhylomeDB" id="Q57039"/>
<dbReference type="UniPathway" id="UPA00115">
    <property type="reaction ID" value="UER00409"/>
</dbReference>
<dbReference type="Proteomes" id="UP000000579">
    <property type="component" value="Chromosome"/>
</dbReference>
<dbReference type="GO" id="GO:0017057">
    <property type="term" value="F:6-phosphogluconolactonase activity"/>
    <property type="evidence" value="ECO:0007669"/>
    <property type="project" value="UniProtKB-EC"/>
</dbReference>
<dbReference type="GO" id="GO:0005975">
    <property type="term" value="P:carbohydrate metabolic process"/>
    <property type="evidence" value="ECO:0007669"/>
    <property type="project" value="InterPro"/>
</dbReference>
<dbReference type="GO" id="GO:0006098">
    <property type="term" value="P:pentose-phosphate shunt"/>
    <property type="evidence" value="ECO:0007669"/>
    <property type="project" value="UniProtKB-UniPathway"/>
</dbReference>
<dbReference type="CDD" id="cd01400">
    <property type="entry name" value="6PGL"/>
    <property type="match status" value="1"/>
</dbReference>
<dbReference type="FunFam" id="3.40.50.1360:FF:000015">
    <property type="entry name" value="Hexose-6-phosphate dehydrogenase/glucose 1-dehydrogenase"/>
    <property type="match status" value="1"/>
</dbReference>
<dbReference type="Gene3D" id="3.40.50.1360">
    <property type="match status" value="1"/>
</dbReference>
<dbReference type="InterPro" id="IPR005900">
    <property type="entry name" value="6-phosphogluconolactonase_DevB"/>
</dbReference>
<dbReference type="InterPro" id="IPR006148">
    <property type="entry name" value="Glc/Gal-6P_isomerase"/>
</dbReference>
<dbReference type="InterPro" id="IPR037171">
    <property type="entry name" value="NagB/RpiA_transferase-like"/>
</dbReference>
<dbReference type="InterPro" id="IPR039104">
    <property type="entry name" value="PGLS"/>
</dbReference>
<dbReference type="NCBIfam" id="TIGR01198">
    <property type="entry name" value="pgl"/>
    <property type="match status" value="1"/>
</dbReference>
<dbReference type="PANTHER" id="PTHR11054">
    <property type="entry name" value="6-PHOSPHOGLUCONOLACTONASE"/>
    <property type="match status" value="1"/>
</dbReference>
<dbReference type="PANTHER" id="PTHR11054:SF0">
    <property type="entry name" value="6-PHOSPHOGLUCONOLACTONASE"/>
    <property type="match status" value="1"/>
</dbReference>
<dbReference type="Pfam" id="PF01182">
    <property type="entry name" value="Glucosamine_iso"/>
    <property type="match status" value="1"/>
</dbReference>
<dbReference type="SUPFAM" id="SSF100950">
    <property type="entry name" value="NagB/RpiA/CoA transferase-like"/>
    <property type="match status" value="1"/>
</dbReference>
<keyword id="KW-0378">Hydrolase</keyword>
<keyword id="KW-1185">Reference proteome</keyword>
<evidence type="ECO:0000305" key="1"/>
<accession>Q57039</accession>
<accession>P96334</accession>
<reference key="1">
    <citation type="journal article" date="1995" name="Science">
        <title>Whole-genome random sequencing and assembly of Haemophilus influenzae Rd.</title>
        <authorList>
            <person name="Fleischmann R.D."/>
            <person name="Adams M.D."/>
            <person name="White O."/>
            <person name="Clayton R.A."/>
            <person name="Kirkness E.F."/>
            <person name="Kerlavage A.R."/>
            <person name="Bult C.J."/>
            <person name="Tomb J.-F."/>
            <person name="Dougherty B.A."/>
            <person name="Merrick J.M."/>
            <person name="McKenney K."/>
            <person name="Sutton G.G."/>
            <person name="FitzHugh W."/>
            <person name="Fields C.A."/>
            <person name="Gocayne J.D."/>
            <person name="Scott J.D."/>
            <person name="Shirley R."/>
            <person name="Liu L.-I."/>
            <person name="Glodek A."/>
            <person name="Kelley J.M."/>
            <person name="Weidman J.F."/>
            <person name="Phillips C.A."/>
            <person name="Spriggs T."/>
            <person name="Hedblom E."/>
            <person name="Cotton M.D."/>
            <person name="Utterback T.R."/>
            <person name="Hanna M.C."/>
            <person name="Nguyen D.T."/>
            <person name="Saudek D.M."/>
            <person name="Brandon R.C."/>
            <person name="Fine L.D."/>
            <person name="Fritchman J.L."/>
            <person name="Fuhrmann J.L."/>
            <person name="Geoghagen N.S.M."/>
            <person name="Gnehm C.L."/>
            <person name="McDonald L.A."/>
            <person name="Small K.V."/>
            <person name="Fraser C.M."/>
            <person name="Smith H.O."/>
            <person name="Venter J.C."/>
        </authorList>
    </citation>
    <scope>NUCLEOTIDE SEQUENCE [LARGE SCALE GENOMIC DNA]</scope>
    <source>
        <strain>ATCC 51907 / DSM 11121 / KW20 / Rd</strain>
    </source>
</reference>
<comment type="function">
    <text>Hydrolysis of 6-phosphogluconolactone to 6-phosphogluconate.</text>
</comment>
<comment type="catalytic activity">
    <reaction>
        <text>6-phospho-D-glucono-1,5-lactone + H2O = 6-phospho-D-gluconate + H(+)</text>
        <dbReference type="Rhea" id="RHEA:12556"/>
        <dbReference type="ChEBI" id="CHEBI:15377"/>
        <dbReference type="ChEBI" id="CHEBI:15378"/>
        <dbReference type="ChEBI" id="CHEBI:57955"/>
        <dbReference type="ChEBI" id="CHEBI:58759"/>
        <dbReference type="EC" id="3.1.1.31"/>
    </reaction>
</comment>
<comment type="pathway">
    <text>Carbohydrate degradation; pentose phosphate pathway; D-ribulose 5-phosphate from D-glucose 6-phosphate (oxidative stage): step 2/3.</text>
</comment>
<comment type="similarity">
    <text evidence="1">Belongs to the glucosamine/galactosamine-6-phosphate isomerase family. 6-phosphogluconolactonase subfamily.</text>
</comment>
<comment type="sequence caution" evidence="1">
    <conflict type="frameshift">
        <sequence resource="EMBL-CDS" id="AAC22212"/>
    </conflict>
</comment>
<sequence>MNYISFPTAQHAVDKIAQEFVIYSQLNHPVHISLSGGSTPKLLFKTLAKSPYAEQINWKNLHFWWGDDRMVPPSDPESNYGEVQKLLFDHIQIPAENIHRIRGENEPHFELKRFEEELSAVIPNGVFDWIILGMGIDGHTASLFPHQTNFDDENLAVIAKHPESGQIRISKTAKLIEQAKRITYLVTGESKADILKEIQTTPAENLPYPAAKIKAKNGVTEWYLDKAAVRLL</sequence>
<proteinExistence type="inferred from homology"/>
<name>6PGL_HAEIN</name>
<gene>
    <name type="primary">pgl</name>
    <name type="synonym">devB</name>
    <name type="ordered locus">HI_0556</name>
</gene>